<proteinExistence type="evidence at protein level"/>
<name>MNAT_ECOLI</name>
<gene>
    <name evidence="5 9" type="primary">mnaT</name>
    <name type="synonym">yncA</name>
    <name type="ordered locus">b1448</name>
    <name type="ordered locus">JW5233</name>
</gene>
<feature type="chain" id="PRO_0000074577" description="L-amino acid N-acyltransferase MnaT">
    <location>
        <begin position="1"/>
        <end position="172"/>
    </location>
</feature>
<feature type="domain" description="N-acetyltransferase" evidence="2">
    <location>
        <begin position="1"/>
        <end position="163"/>
    </location>
</feature>
<feature type="binding site" evidence="1">
    <location>
        <begin position="85"/>
        <end position="87"/>
    </location>
    <ligand>
        <name>acetyl-CoA</name>
        <dbReference type="ChEBI" id="CHEBI:57288"/>
    </ligand>
</feature>
<feature type="binding site" evidence="1">
    <location>
        <begin position="93"/>
        <end position="98"/>
    </location>
    <ligand>
        <name>acetyl-CoA</name>
        <dbReference type="ChEBI" id="CHEBI:57288"/>
    </ligand>
</feature>
<feature type="binding site" evidence="1">
    <location>
        <position position="124"/>
    </location>
    <ligand>
        <name>acetyl-CoA</name>
        <dbReference type="ChEBI" id="CHEBI:57288"/>
    </ligand>
</feature>
<feature type="binding site" evidence="1">
    <location>
        <position position="133"/>
    </location>
    <ligand>
        <name>acetyl-CoA</name>
        <dbReference type="ChEBI" id="CHEBI:57288"/>
    </ligand>
</feature>
<accession>P76112</accession>
<accession>P77401</accession>
<protein>
    <recommendedName>
        <fullName evidence="7 8">L-amino acid N-acyltransferase MnaT</fullName>
        <ecNumber evidence="3 4">2.3.1.-</ecNumber>
    </recommendedName>
    <alternativeName>
        <fullName evidence="7">L-methionine N-acyltransferase</fullName>
    </alternativeName>
    <alternativeName>
        <fullName evidence="8">L-methionine sulfoximine/L-methionine sulfone N-acetyltransferase</fullName>
    </alternativeName>
    <alternativeName>
        <fullName evidence="7">L-phenylglycine N-acetyltransferase</fullName>
    </alternativeName>
</protein>
<sequence length="172" mass="19248">MSIRFARKADCAAIAEIYNHAVLYTAAIWNDQTVDADNRIAWFEARTLAGYPVLVSEENGVVTGYASFGDWRSFDGFRHTVEHSVYVHPDHQGKGLGRKLLSRLIDEARDCGKHVMVAGIESQNQASLHLHQSLGFVVTAQMPQVGTKFGRWLDLTFMQLQLDERTEPDAIG</sequence>
<keyword id="KW-0012">Acyltransferase</keyword>
<keyword id="KW-1185">Reference proteome</keyword>
<keyword id="KW-0808">Transferase</keyword>
<dbReference type="EC" id="2.3.1.-" evidence="3 4"/>
<dbReference type="EMBL" id="U00096">
    <property type="protein sequence ID" value="AAC74530.1"/>
    <property type="molecule type" value="Genomic_DNA"/>
</dbReference>
<dbReference type="EMBL" id="AP009048">
    <property type="protein sequence ID" value="BAA15080.2"/>
    <property type="molecule type" value="Genomic_DNA"/>
</dbReference>
<dbReference type="PIR" id="C64897">
    <property type="entry name" value="C64897"/>
</dbReference>
<dbReference type="RefSeq" id="NP_415965.1">
    <property type="nucleotide sequence ID" value="NC_000913.3"/>
</dbReference>
<dbReference type="RefSeq" id="WP_001310799.1">
    <property type="nucleotide sequence ID" value="NZ_SSZK01000021.1"/>
</dbReference>
<dbReference type="SMR" id="P76112"/>
<dbReference type="BioGRID" id="4260194">
    <property type="interactions" value="12"/>
</dbReference>
<dbReference type="FunCoup" id="P76112">
    <property type="interactions" value="47"/>
</dbReference>
<dbReference type="STRING" id="511145.b1448"/>
<dbReference type="jPOST" id="P76112"/>
<dbReference type="PaxDb" id="511145-b1448"/>
<dbReference type="EnsemblBacteria" id="AAC74530">
    <property type="protein sequence ID" value="AAC74530"/>
    <property type="gene ID" value="b1448"/>
</dbReference>
<dbReference type="GeneID" id="946010"/>
<dbReference type="KEGG" id="ecj:JW5233"/>
<dbReference type="KEGG" id="eco:b1448"/>
<dbReference type="KEGG" id="ecoc:C3026_08425"/>
<dbReference type="PATRIC" id="fig|1411691.4.peg.820"/>
<dbReference type="EchoBASE" id="EB3533"/>
<dbReference type="eggNOG" id="COG1247">
    <property type="taxonomic scope" value="Bacteria"/>
</dbReference>
<dbReference type="HOGENOM" id="CLU_013985_4_4_6"/>
<dbReference type="InParanoid" id="P76112"/>
<dbReference type="OMA" id="RTAYDWT"/>
<dbReference type="OrthoDB" id="5459937at2"/>
<dbReference type="PhylomeDB" id="P76112"/>
<dbReference type="BioCyc" id="EcoCyc:G6759-MONOMER"/>
<dbReference type="BioCyc" id="MetaCyc:G6759-MONOMER"/>
<dbReference type="PRO" id="PR:P76112"/>
<dbReference type="Proteomes" id="UP000000625">
    <property type="component" value="Chromosome"/>
</dbReference>
<dbReference type="GO" id="GO:0016747">
    <property type="term" value="F:acyltransferase activity, transferring groups other than amino-acyl groups"/>
    <property type="evidence" value="ECO:0000318"/>
    <property type="project" value="GO_Central"/>
</dbReference>
<dbReference type="GO" id="GO:0103045">
    <property type="term" value="F:L-methionine N-acyltransferase activity"/>
    <property type="evidence" value="ECO:0007669"/>
    <property type="project" value="RHEA"/>
</dbReference>
<dbReference type="CDD" id="cd04301">
    <property type="entry name" value="NAT_SF"/>
    <property type="match status" value="1"/>
</dbReference>
<dbReference type="FunFam" id="3.40.630.30:FF:000026">
    <property type="entry name" value="Phosphinothricin acetyltransferase"/>
    <property type="match status" value="1"/>
</dbReference>
<dbReference type="Gene3D" id="3.40.630.30">
    <property type="match status" value="1"/>
</dbReference>
<dbReference type="InterPro" id="IPR016181">
    <property type="entry name" value="Acyl_CoA_acyltransferase"/>
</dbReference>
<dbReference type="InterPro" id="IPR000182">
    <property type="entry name" value="GNAT_dom"/>
</dbReference>
<dbReference type="PANTHER" id="PTHR43072">
    <property type="entry name" value="N-ACETYLTRANSFERASE"/>
    <property type="match status" value="1"/>
</dbReference>
<dbReference type="PANTHER" id="PTHR43072:SF23">
    <property type="entry name" value="UPF0039 PROTEIN C11D3.02C"/>
    <property type="match status" value="1"/>
</dbReference>
<dbReference type="Pfam" id="PF00583">
    <property type="entry name" value="Acetyltransf_1"/>
    <property type="match status" value="1"/>
</dbReference>
<dbReference type="SUPFAM" id="SSF55729">
    <property type="entry name" value="Acyl-CoA N-acyltransferases (Nat)"/>
    <property type="match status" value="1"/>
</dbReference>
<dbReference type="PROSITE" id="PS51186">
    <property type="entry name" value="GNAT"/>
    <property type="match status" value="1"/>
</dbReference>
<reference key="1">
    <citation type="journal article" date="1996" name="DNA Res.">
        <title>A 570-kb DNA sequence of the Escherichia coli K-12 genome corresponding to the 28.0-40.1 min region on the linkage map.</title>
        <authorList>
            <person name="Aiba H."/>
            <person name="Baba T."/>
            <person name="Fujita K."/>
            <person name="Hayashi K."/>
            <person name="Inada T."/>
            <person name="Isono K."/>
            <person name="Itoh T."/>
            <person name="Kasai H."/>
            <person name="Kashimoto K."/>
            <person name="Kimura S."/>
            <person name="Kitakawa M."/>
            <person name="Kitagawa M."/>
            <person name="Makino K."/>
            <person name="Miki T."/>
            <person name="Mizobuchi K."/>
            <person name="Mori H."/>
            <person name="Mori T."/>
            <person name="Motomura K."/>
            <person name="Nakade S."/>
            <person name="Nakamura Y."/>
            <person name="Nashimoto H."/>
            <person name="Nishio Y."/>
            <person name="Oshima T."/>
            <person name="Saito N."/>
            <person name="Sampei G."/>
            <person name="Seki Y."/>
            <person name="Sivasundaram S."/>
            <person name="Tagami H."/>
            <person name="Takeda J."/>
            <person name="Takemoto K."/>
            <person name="Takeuchi Y."/>
            <person name="Wada C."/>
            <person name="Yamamoto Y."/>
            <person name="Horiuchi T."/>
        </authorList>
    </citation>
    <scope>NUCLEOTIDE SEQUENCE [LARGE SCALE GENOMIC DNA]</scope>
    <source>
        <strain>K12 / W3110 / ATCC 27325 / DSM 5911</strain>
    </source>
</reference>
<reference key="2">
    <citation type="journal article" date="1997" name="Science">
        <title>The complete genome sequence of Escherichia coli K-12.</title>
        <authorList>
            <person name="Blattner F.R."/>
            <person name="Plunkett G. III"/>
            <person name="Bloch C.A."/>
            <person name="Perna N.T."/>
            <person name="Burland V."/>
            <person name="Riley M."/>
            <person name="Collado-Vides J."/>
            <person name="Glasner J.D."/>
            <person name="Rode C.K."/>
            <person name="Mayhew G.F."/>
            <person name="Gregor J."/>
            <person name="Davis N.W."/>
            <person name="Kirkpatrick H.A."/>
            <person name="Goeden M.A."/>
            <person name="Rose D.J."/>
            <person name="Mau B."/>
            <person name="Shao Y."/>
        </authorList>
    </citation>
    <scope>NUCLEOTIDE SEQUENCE [LARGE SCALE GENOMIC DNA]</scope>
    <source>
        <strain>K12 / MG1655 / ATCC 47076</strain>
    </source>
</reference>
<reference key="3">
    <citation type="journal article" date="2006" name="Mol. Syst. Biol.">
        <title>Highly accurate genome sequences of Escherichia coli K-12 strains MG1655 and W3110.</title>
        <authorList>
            <person name="Hayashi K."/>
            <person name="Morooka N."/>
            <person name="Yamamoto Y."/>
            <person name="Fujita K."/>
            <person name="Isono K."/>
            <person name="Choi S."/>
            <person name="Ohtsubo E."/>
            <person name="Baba T."/>
            <person name="Wanner B.L."/>
            <person name="Mori H."/>
            <person name="Horiuchi T."/>
        </authorList>
    </citation>
    <scope>NUCLEOTIDE SEQUENCE [LARGE SCALE GENOMIC DNA]</scope>
    <source>
        <strain>K12 / W3110 / ATCC 27325 / DSM 5911</strain>
    </source>
</reference>
<reference key="4">
    <citation type="patent" date="2008-08-22" number="US0047880">
        <title>Production of N-acylated sulphur-containing amino acids with microorganisms having enhanced N-acyltransferase enzymatic activity.</title>
        <authorList>
            <person name="Figge R."/>
            <person name="Barbier G."/>
            <person name="Bestel-Corre G."/>
        </authorList>
    </citation>
    <scope>FUNCTION AS AN ACYLTRANSFERASE</scope>
    <scope>CATALYTIC ACTIVITY</scope>
    <scope>BIOTECHNOLOGY</scope>
    <source>
        <strain>K12 / MG1655 / ATCC 47076</strain>
    </source>
</reference>
<reference key="5">
    <citation type="journal article" date="2017" name="Nat. Methods">
        <title>Nontargeted in vitro metabolomics for high-throughput identification of novel enzymes in Escherichia coli.</title>
        <authorList>
            <person name="Sevin D.C."/>
            <person name="Fuhrer T."/>
            <person name="Zamboni N."/>
            <person name="Sauer U."/>
        </authorList>
    </citation>
    <scope>FUNCTION</scope>
    <scope>CATALYTIC ACTIVITY</scope>
    <scope>DISRUPTION PHENOTYPE</scope>
    <source>
        <strain>K12</strain>
    </source>
</reference>
<organism>
    <name type="scientific">Escherichia coli (strain K12)</name>
    <dbReference type="NCBI Taxonomy" id="83333"/>
    <lineage>
        <taxon>Bacteria</taxon>
        <taxon>Pseudomonadati</taxon>
        <taxon>Pseudomonadota</taxon>
        <taxon>Gammaproteobacteria</taxon>
        <taxon>Enterobacterales</taxon>
        <taxon>Enterobacteriaceae</taxon>
        <taxon>Escherichia</taxon>
    </lineage>
</organism>
<evidence type="ECO:0000250" key="1">
    <source>
        <dbReference type="UniProtKB" id="Q8ZPD3"/>
    </source>
</evidence>
<evidence type="ECO:0000255" key="2">
    <source>
        <dbReference type="PROSITE-ProRule" id="PRU00532"/>
    </source>
</evidence>
<evidence type="ECO:0000269" key="3">
    <source>
    </source>
</evidence>
<evidence type="ECO:0000269" key="4">
    <source ref="4"/>
</evidence>
<evidence type="ECO:0000303" key="5">
    <source ref="4"/>
</evidence>
<evidence type="ECO:0000305" key="6"/>
<evidence type="ECO:0000305" key="7">
    <source>
    </source>
</evidence>
<evidence type="ECO:0000305" key="8">
    <source ref="4"/>
</evidence>
<evidence type="ECO:0000312" key="9">
    <source>
        <dbReference type="EMBL" id="AAC74530.1"/>
    </source>
</evidence>
<comment type="function">
    <text evidence="1 3 4">Acyltransferase that appears to be required for E.coli optimal growth rate and yield via the formation of N-acetylated amino acids. Catalyzes the acylation of L-methionine using acetyl-CoA or propanoyl-CoA as acyl donors, and the acetylation of L-phenylglycine (PubMed:27941785). Is also able to N-acylate other free L-amino acids and their derivatives using a CoA thioester as cosubstrate. Using acetyl-CoA as an acyl donor, substrate specificity is methionine sulfone &gt; methionine sulfoximine &gt; methionine sulfoxide &gt; methionine. Asparagine, lysine, glutamine, aspartate and glutamate are very poor substrates. Using methionine as a substrate, acyl donor preference is propanoyl-CoA &gt; acetyl-CoA &gt;&gt; butyryl-CoA (Ref.4). Likely plays a role in the resistance against the toxic effects of L-methionine sulfoximine (MSX), via its ability to catalyze its acetylation; MSX is a rare amino acid which inhibits glutamine synthetase (GlnA) (By similarity).</text>
</comment>
<comment type="catalytic activity">
    <reaction evidence="3 4">
        <text>L-methionine + acetyl-CoA = N-acetyl-L-methionine + CoA + H(+)</text>
        <dbReference type="Rhea" id="RHEA:44144"/>
        <dbReference type="ChEBI" id="CHEBI:15378"/>
        <dbReference type="ChEBI" id="CHEBI:57287"/>
        <dbReference type="ChEBI" id="CHEBI:57288"/>
        <dbReference type="ChEBI" id="CHEBI:57844"/>
        <dbReference type="ChEBI" id="CHEBI:71670"/>
    </reaction>
</comment>
<comment type="catalytic activity">
    <reaction evidence="3 4">
        <text>propanoyl-CoA + L-methionine = N-propanoyl-L-methioninate + CoA + H(+)</text>
        <dbReference type="Rhea" id="RHEA:52600"/>
        <dbReference type="ChEBI" id="CHEBI:15378"/>
        <dbReference type="ChEBI" id="CHEBI:57287"/>
        <dbReference type="ChEBI" id="CHEBI:57392"/>
        <dbReference type="ChEBI" id="CHEBI:57844"/>
        <dbReference type="ChEBI" id="CHEBI:136704"/>
    </reaction>
</comment>
<comment type="catalytic activity">
    <reaction evidence="3">
        <text>L-alpha-phenylglycine + acetyl-CoA = N-acetyl-L-alpha-phenylglycine + CoA + H(+)</text>
        <dbReference type="Rhea" id="RHEA:52680"/>
        <dbReference type="ChEBI" id="CHEBI:15378"/>
        <dbReference type="ChEBI" id="CHEBI:57287"/>
        <dbReference type="ChEBI" id="CHEBI:57288"/>
        <dbReference type="ChEBI" id="CHEBI:136765"/>
        <dbReference type="ChEBI" id="CHEBI:136766"/>
    </reaction>
</comment>
<comment type="catalytic activity">
    <reaction evidence="4">
        <text>L-methionine sulfoximine + acetyl-CoA = N-acetyl-L-methionine sulfoximine + CoA + H(+)</text>
        <dbReference type="Rhea" id="RHEA:47660"/>
        <dbReference type="ChEBI" id="CHEBI:15378"/>
        <dbReference type="ChEBI" id="CHEBI:57287"/>
        <dbReference type="ChEBI" id="CHEBI:57288"/>
        <dbReference type="ChEBI" id="CHEBI:87826"/>
        <dbReference type="ChEBI" id="CHEBI:87827"/>
    </reaction>
</comment>
<comment type="catalytic activity">
    <reaction evidence="4">
        <text>L-methionine sulfone + acetyl-CoA = N-acetyl-L-methionine sulfone + CoA + H(+)</text>
        <dbReference type="Rhea" id="RHEA:47656"/>
        <dbReference type="ChEBI" id="CHEBI:15378"/>
        <dbReference type="ChEBI" id="CHEBI:57287"/>
        <dbReference type="ChEBI" id="CHEBI:57288"/>
        <dbReference type="ChEBI" id="CHEBI:87824"/>
        <dbReference type="ChEBI" id="CHEBI:87825"/>
    </reaction>
</comment>
<comment type="disruption phenotype">
    <text evidence="3">Cells lacking this gene show a reduced growth rate and a markedly reduced yield in glucose minimal medium compared to wild-type; this phenotype can be partially rescued by adding L-phenylglycine to the medium, which reflects that other enzymes may also catalyze its acetylation, but with lower affinities. The deletion mutant strain also shows a consistent change in the level of several metabolites whose masses can correspond to L-phenylglycine, L-pipecolate or N4-acetylaminobutanal.</text>
</comment>
<comment type="biotechnology">
    <text evidence="4">Expression leads to increased levels of N-acylated L-amino acids which could be used in a number of applications.</text>
</comment>
<comment type="similarity">
    <text evidence="6">Belongs to the acetyltransferase family. PAT/BAR subfamily.</text>
</comment>